<reference key="1">
    <citation type="journal article" date="1996" name="Nucleic Acids Res.">
        <title>Complete sequence analysis of the genome of the bacterium Mycoplasma pneumoniae.</title>
        <authorList>
            <person name="Himmelreich R."/>
            <person name="Hilbert H."/>
            <person name="Plagens H."/>
            <person name="Pirkl E."/>
            <person name="Li B.-C."/>
            <person name="Herrmann R."/>
        </authorList>
    </citation>
    <scope>NUCLEOTIDE SEQUENCE [LARGE SCALE GENOMIC DNA]</scope>
    <source>
        <strain>ATCC 29342 / M129 / Subtype 1</strain>
    </source>
</reference>
<gene>
    <name type="ordered locus">MPN_580</name>
    <name type="ORF">D02_orf140</name>
    <name type="ORF">MP262</name>
</gene>
<feature type="chain" id="PRO_0000210730" description="Uncharacterized protein MPN_580">
    <location>
        <begin position="1"/>
        <end position="140"/>
    </location>
</feature>
<evidence type="ECO:0000305" key="1"/>
<name>Y580_MYCPN</name>
<dbReference type="EMBL" id="U00089">
    <property type="protein sequence ID" value="AAB95910.1"/>
    <property type="molecule type" value="Genomic_DNA"/>
</dbReference>
<dbReference type="PIR" id="S73588">
    <property type="entry name" value="S73588"/>
</dbReference>
<dbReference type="RefSeq" id="NP_110269.1">
    <property type="nucleotide sequence ID" value="NC_000912.1"/>
</dbReference>
<dbReference type="RefSeq" id="WP_010874937.1">
    <property type="nucleotide sequence ID" value="NZ_OU342337.1"/>
</dbReference>
<dbReference type="IntAct" id="P75200">
    <property type="interactions" value="1"/>
</dbReference>
<dbReference type="STRING" id="272634.MPN_580"/>
<dbReference type="EnsemblBacteria" id="AAB95910">
    <property type="protein sequence ID" value="AAB95910"/>
    <property type="gene ID" value="MPN_580"/>
</dbReference>
<dbReference type="KEGG" id="mpn:MPN_580"/>
<dbReference type="PATRIC" id="fig|272634.6.peg.641"/>
<dbReference type="HOGENOM" id="CLU_134995_0_0_14"/>
<dbReference type="BioCyc" id="MPNE272634:G1GJ3-945-MONOMER"/>
<dbReference type="Proteomes" id="UP000000808">
    <property type="component" value="Chromosome"/>
</dbReference>
<dbReference type="GO" id="GO:0005524">
    <property type="term" value="F:ATP binding"/>
    <property type="evidence" value="ECO:0007669"/>
    <property type="project" value="InterPro"/>
</dbReference>
<dbReference type="GO" id="GO:0003723">
    <property type="term" value="F:RNA binding"/>
    <property type="evidence" value="ECO:0007669"/>
    <property type="project" value="InterPro"/>
</dbReference>
<dbReference type="GO" id="GO:0003724">
    <property type="term" value="F:RNA helicase activity"/>
    <property type="evidence" value="ECO:0007669"/>
    <property type="project" value="InterPro"/>
</dbReference>
<dbReference type="InterPro" id="IPR001850">
    <property type="entry name" value="Flavi_NS3_S7"/>
</dbReference>
<dbReference type="InterPro" id="IPR022381">
    <property type="entry name" value="Uncharacterised_MG067"/>
</dbReference>
<dbReference type="Pfam" id="PF00949">
    <property type="entry name" value="Peptidase_S7"/>
    <property type="match status" value="1"/>
</dbReference>
<dbReference type="PRINTS" id="PR00840">
    <property type="entry name" value="Y06768FAMILY"/>
</dbReference>
<keyword id="KW-1185">Reference proteome</keyword>
<accession>P75200</accession>
<organism>
    <name type="scientific">Mycoplasma pneumoniae (strain ATCC 29342 / M129 / Subtype 1)</name>
    <name type="common">Mycoplasmoides pneumoniae</name>
    <dbReference type="NCBI Taxonomy" id="272634"/>
    <lineage>
        <taxon>Bacteria</taxon>
        <taxon>Bacillati</taxon>
        <taxon>Mycoplasmatota</taxon>
        <taxon>Mycoplasmoidales</taxon>
        <taxon>Mycoplasmoidaceae</taxon>
        <taxon>Mycoplasmoides</taxon>
    </lineage>
</organism>
<sequence>MTAQYYQLDEKFNQQTYEQYGKGLALNDLYIRRGASGSLVFNQDQQISGIFFAVASHSDPKPGEKTLVQLLRLPVDESTTATVKDNCVPYDLIFGNRNTTHYYTQFAKQHHTHLYEQIQQSNDQLIKFIDRKNVSCSMVS</sequence>
<protein>
    <recommendedName>
        <fullName>Uncharacterized protein MPN_580</fullName>
    </recommendedName>
</protein>
<proteinExistence type="inferred from homology"/>
<comment type="similarity">
    <text evidence="1">Belongs to the MG067/MG068/MG395 family.</text>
</comment>